<name>KDPC_BRASO</name>
<comment type="function">
    <text evidence="1">Part of the high-affinity ATP-driven potassium transport (or Kdp) system, which catalyzes the hydrolysis of ATP coupled with the electrogenic transport of potassium into the cytoplasm. This subunit acts as a catalytic chaperone that increases the ATP-binding affinity of the ATP-hydrolyzing subunit KdpB by the formation of a transient KdpB/KdpC/ATP ternary complex.</text>
</comment>
<comment type="subunit">
    <text evidence="1">The system is composed of three essential subunits: KdpA, KdpB and KdpC.</text>
</comment>
<comment type="subcellular location">
    <subcellularLocation>
        <location evidence="1">Cell inner membrane</location>
        <topology evidence="1">Single-pass membrane protein</topology>
    </subcellularLocation>
</comment>
<comment type="similarity">
    <text evidence="1">Belongs to the KdpC family.</text>
</comment>
<accession>A4Z016</accession>
<evidence type="ECO:0000255" key="1">
    <source>
        <dbReference type="HAMAP-Rule" id="MF_00276"/>
    </source>
</evidence>
<evidence type="ECO:0000256" key="2">
    <source>
        <dbReference type="SAM" id="MobiDB-lite"/>
    </source>
</evidence>
<feature type="chain" id="PRO_1000022265" description="Potassium-transporting ATPase KdpC subunit">
    <location>
        <begin position="1"/>
        <end position="202"/>
    </location>
</feature>
<feature type="transmembrane region" description="Helical" evidence="1">
    <location>
        <begin position="7"/>
        <end position="27"/>
    </location>
</feature>
<feature type="region of interest" description="Disordered" evidence="2">
    <location>
        <begin position="66"/>
        <end position="103"/>
    </location>
</feature>
<feature type="compositionally biased region" description="Polar residues" evidence="2">
    <location>
        <begin position="71"/>
        <end position="84"/>
    </location>
</feature>
<feature type="compositionally biased region" description="Polar residues" evidence="2">
    <location>
        <begin position="91"/>
        <end position="101"/>
    </location>
</feature>
<protein>
    <recommendedName>
        <fullName evidence="1">Potassium-transporting ATPase KdpC subunit</fullName>
    </recommendedName>
    <alternativeName>
        <fullName evidence="1">ATP phosphohydrolase [potassium-transporting] C chain</fullName>
    </alternativeName>
    <alternativeName>
        <fullName evidence="1">Potassium-binding and translocating subunit C</fullName>
    </alternativeName>
    <alternativeName>
        <fullName evidence="1">Potassium-translocating ATPase C chain</fullName>
    </alternativeName>
</protein>
<sequence length="202" mass="21187">MLKEIRPAIFVLLALTLITGLLYPLAMTGLAVTIFPAQAAGSLITRNGQVIGSALIGQEFKDDRYFHGRPSATSTADPNDSTKTVPAPYNAANSSGSNLGPTSKALADRVKEDVDKLKAENPAQPVPVDLVTTSASGLDPHVSPEAAMFQVPRVAKARGVPEDRVRALVVKNTEGRLIGLLGEPRVNVLALNLALDAATATK</sequence>
<proteinExistence type="inferred from homology"/>
<keyword id="KW-0067">ATP-binding</keyword>
<keyword id="KW-0997">Cell inner membrane</keyword>
<keyword id="KW-1003">Cell membrane</keyword>
<keyword id="KW-0406">Ion transport</keyword>
<keyword id="KW-0472">Membrane</keyword>
<keyword id="KW-0547">Nucleotide-binding</keyword>
<keyword id="KW-0630">Potassium</keyword>
<keyword id="KW-0633">Potassium transport</keyword>
<keyword id="KW-1185">Reference proteome</keyword>
<keyword id="KW-0812">Transmembrane</keyword>
<keyword id="KW-1133">Transmembrane helix</keyword>
<keyword id="KW-0813">Transport</keyword>
<dbReference type="EMBL" id="CU234118">
    <property type="protein sequence ID" value="CAL79492.1"/>
    <property type="molecule type" value="Genomic_DNA"/>
</dbReference>
<dbReference type="RefSeq" id="WP_012029395.1">
    <property type="nucleotide sequence ID" value="NC_009445.1"/>
</dbReference>
<dbReference type="SMR" id="A4Z016"/>
<dbReference type="STRING" id="114615.BRADO5828"/>
<dbReference type="KEGG" id="bra:BRADO5828"/>
<dbReference type="eggNOG" id="COG2156">
    <property type="taxonomic scope" value="Bacteria"/>
</dbReference>
<dbReference type="HOGENOM" id="CLU_077094_2_0_5"/>
<dbReference type="OrthoDB" id="9788285at2"/>
<dbReference type="Proteomes" id="UP000001994">
    <property type="component" value="Chromosome"/>
</dbReference>
<dbReference type="GO" id="GO:0005886">
    <property type="term" value="C:plasma membrane"/>
    <property type="evidence" value="ECO:0007669"/>
    <property type="project" value="UniProtKB-SubCell"/>
</dbReference>
<dbReference type="GO" id="GO:0005524">
    <property type="term" value="F:ATP binding"/>
    <property type="evidence" value="ECO:0007669"/>
    <property type="project" value="UniProtKB-UniRule"/>
</dbReference>
<dbReference type="GO" id="GO:0008556">
    <property type="term" value="F:P-type potassium transmembrane transporter activity"/>
    <property type="evidence" value="ECO:0007669"/>
    <property type="project" value="InterPro"/>
</dbReference>
<dbReference type="HAMAP" id="MF_00276">
    <property type="entry name" value="KdpC"/>
    <property type="match status" value="1"/>
</dbReference>
<dbReference type="InterPro" id="IPR003820">
    <property type="entry name" value="KdpC"/>
</dbReference>
<dbReference type="NCBIfam" id="TIGR00681">
    <property type="entry name" value="kdpC"/>
    <property type="match status" value="1"/>
</dbReference>
<dbReference type="NCBIfam" id="NF001454">
    <property type="entry name" value="PRK00315.1"/>
    <property type="match status" value="1"/>
</dbReference>
<dbReference type="NCBIfam" id="NF010603">
    <property type="entry name" value="PRK13999.1"/>
    <property type="match status" value="1"/>
</dbReference>
<dbReference type="PANTHER" id="PTHR30042">
    <property type="entry name" value="POTASSIUM-TRANSPORTING ATPASE C CHAIN"/>
    <property type="match status" value="1"/>
</dbReference>
<dbReference type="PANTHER" id="PTHR30042:SF2">
    <property type="entry name" value="POTASSIUM-TRANSPORTING ATPASE KDPC SUBUNIT"/>
    <property type="match status" value="1"/>
</dbReference>
<dbReference type="Pfam" id="PF02669">
    <property type="entry name" value="KdpC"/>
    <property type="match status" value="1"/>
</dbReference>
<dbReference type="PIRSF" id="PIRSF001296">
    <property type="entry name" value="K_ATPase_KdpC"/>
    <property type="match status" value="1"/>
</dbReference>
<organism>
    <name type="scientific">Bradyrhizobium sp. (strain ORS 278)</name>
    <dbReference type="NCBI Taxonomy" id="114615"/>
    <lineage>
        <taxon>Bacteria</taxon>
        <taxon>Pseudomonadati</taxon>
        <taxon>Pseudomonadota</taxon>
        <taxon>Alphaproteobacteria</taxon>
        <taxon>Hyphomicrobiales</taxon>
        <taxon>Nitrobacteraceae</taxon>
        <taxon>Bradyrhizobium</taxon>
    </lineage>
</organism>
<reference key="1">
    <citation type="journal article" date="2007" name="Science">
        <title>Legumes symbioses: absence of nod genes in photosynthetic bradyrhizobia.</title>
        <authorList>
            <person name="Giraud E."/>
            <person name="Moulin L."/>
            <person name="Vallenet D."/>
            <person name="Barbe V."/>
            <person name="Cytryn E."/>
            <person name="Avarre J.-C."/>
            <person name="Jaubert M."/>
            <person name="Simon D."/>
            <person name="Cartieaux F."/>
            <person name="Prin Y."/>
            <person name="Bena G."/>
            <person name="Hannibal L."/>
            <person name="Fardoux J."/>
            <person name="Kojadinovic M."/>
            <person name="Vuillet L."/>
            <person name="Lajus A."/>
            <person name="Cruveiller S."/>
            <person name="Rouy Z."/>
            <person name="Mangenot S."/>
            <person name="Segurens B."/>
            <person name="Dossat C."/>
            <person name="Franck W.L."/>
            <person name="Chang W.-S."/>
            <person name="Saunders E."/>
            <person name="Bruce D."/>
            <person name="Richardson P."/>
            <person name="Normand P."/>
            <person name="Dreyfus B."/>
            <person name="Pignol D."/>
            <person name="Stacey G."/>
            <person name="Emerich D."/>
            <person name="Vermeglio A."/>
            <person name="Medigue C."/>
            <person name="Sadowsky M."/>
        </authorList>
    </citation>
    <scope>NUCLEOTIDE SEQUENCE [LARGE SCALE GENOMIC DNA]</scope>
    <source>
        <strain>ORS 278</strain>
    </source>
</reference>
<gene>
    <name evidence="1" type="primary">kdpC</name>
    <name type="ordered locus">BRADO5828</name>
</gene>